<sequence>MGDVEKGKKIFVQKCAQCHTVEKGGKHKTGPNLNGIFGRKTGQAPGFTYTDANKNKGIIWGEDTLMEYLENPKKYIPGTKMIFAGIKKKGERADLIAYLKKATNE</sequence>
<feature type="initiator methionine" description="Removed" evidence="5">
    <location>
        <position position="1"/>
    </location>
</feature>
<feature type="chain" id="PRO_0000108220" description="Cytochrome c">
    <location>
        <begin position="2"/>
        <end position="105"/>
    </location>
</feature>
<feature type="binding site" description="covalent" evidence="4 5">
    <location>
        <position position="15"/>
    </location>
    <ligand>
        <name>heme c</name>
        <dbReference type="ChEBI" id="CHEBI:61717"/>
    </ligand>
</feature>
<feature type="binding site" description="covalent" evidence="4 5">
    <location>
        <position position="18"/>
    </location>
    <ligand>
        <name>heme c</name>
        <dbReference type="ChEBI" id="CHEBI:61717"/>
    </ligand>
</feature>
<feature type="binding site" description="axial binding residue">
    <location>
        <position position="19"/>
    </location>
    <ligand>
        <name>heme c</name>
        <dbReference type="ChEBI" id="CHEBI:61717"/>
    </ligand>
    <ligandPart>
        <name>Fe</name>
        <dbReference type="ChEBI" id="CHEBI:18248"/>
    </ligandPart>
</feature>
<feature type="binding site" description="axial binding residue">
    <location>
        <position position="81"/>
    </location>
    <ligand>
        <name>heme c</name>
        <dbReference type="ChEBI" id="CHEBI:61717"/>
    </ligand>
    <ligandPart>
        <name>Fe</name>
        <dbReference type="ChEBI" id="CHEBI:18248"/>
    </ligandPart>
</feature>
<feature type="modified residue" description="N-acetylglycine" evidence="5">
    <location>
        <position position="2"/>
    </location>
</feature>
<feature type="modified residue" description="Phosphotyrosine" evidence="2">
    <location>
        <position position="49"/>
    </location>
</feature>
<feature type="modified residue" description="N6-succinyllysine" evidence="3">
    <location>
        <position position="56"/>
    </location>
</feature>
<feature type="modified residue" description="N6-acetyllysine; alternate" evidence="3">
    <location>
        <position position="73"/>
    </location>
</feature>
<feature type="modified residue" description="N6-succinyllysine; alternate" evidence="3">
    <location>
        <position position="73"/>
    </location>
</feature>
<feature type="modified residue" description="Phosphotyrosine" evidence="2">
    <location>
        <position position="98"/>
    </location>
</feature>
<feature type="modified residue" description="N6-acetyllysine" evidence="3">
    <location>
        <position position="100"/>
    </location>
</feature>
<dbReference type="PIR" id="A00011">
    <property type="entry name" value="CCKGG"/>
</dbReference>
<dbReference type="SMR" id="P00014"/>
<dbReference type="iPTMnet" id="P00014"/>
<dbReference type="GO" id="GO:0005829">
    <property type="term" value="C:cytosol"/>
    <property type="evidence" value="ECO:0000250"/>
    <property type="project" value="UniProtKB"/>
</dbReference>
<dbReference type="GO" id="GO:0005758">
    <property type="term" value="C:mitochondrial intermembrane space"/>
    <property type="evidence" value="ECO:0007669"/>
    <property type="project" value="UniProtKB-SubCell"/>
</dbReference>
<dbReference type="GO" id="GO:0009055">
    <property type="term" value="F:electron transfer activity"/>
    <property type="evidence" value="ECO:0007669"/>
    <property type="project" value="InterPro"/>
</dbReference>
<dbReference type="GO" id="GO:0020037">
    <property type="term" value="F:heme binding"/>
    <property type="evidence" value="ECO:0007669"/>
    <property type="project" value="InterPro"/>
</dbReference>
<dbReference type="GO" id="GO:0046872">
    <property type="term" value="F:metal ion binding"/>
    <property type="evidence" value="ECO:0007669"/>
    <property type="project" value="UniProtKB-KW"/>
</dbReference>
<dbReference type="GO" id="GO:0006915">
    <property type="term" value="P:apoptotic process"/>
    <property type="evidence" value="ECO:0007669"/>
    <property type="project" value="UniProtKB-KW"/>
</dbReference>
<dbReference type="FunFam" id="1.10.760.10:FF:000008">
    <property type="entry name" value="Cytochrome c"/>
    <property type="match status" value="1"/>
</dbReference>
<dbReference type="Gene3D" id="1.10.760.10">
    <property type="entry name" value="Cytochrome c-like domain"/>
    <property type="match status" value="1"/>
</dbReference>
<dbReference type="InterPro" id="IPR009056">
    <property type="entry name" value="Cyt_c-like_dom"/>
</dbReference>
<dbReference type="InterPro" id="IPR036909">
    <property type="entry name" value="Cyt_c-like_dom_sf"/>
</dbReference>
<dbReference type="InterPro" id="IPR002327">
    <property type="entry name" value="Cyt_c_1A/1B"/>
</dbReference>
<dbReference type="PANTHER" id="PTHR11961">
    <property type="entry name" value="CYTOCHROME C"/>
    <property type="match status" value="1"/>
</dbReference>
<dbReference type="Pfam" id="PF00034">
    <property type="entry name" value="Cytochrom_C"/>
    <property type="match status" value="1"/>
</dbReference>
<dbReference type="PRINTS" id="PR00604">
    <property type="entry name" value="CYTCHRMECIAB"/>
</dbReference>
<dbReference type="SUPFAM" id="SSF46626">
    <property type="entry name" value="Cytochrome c"/>
    <property type="match status" value="1"/>
</dbReference>
<dbReference type="PROSITE" id="PS51007">
    <property type="entry name" value="CYTC"/>
    <property type="match status" value="1"/>
</dbReference>
<proteinExistence type="evidence at protein level"/>
<keyword id="KW-0007">Acetylation</keyword>
<keyword id="KW-0053">Apoptosis</keyword>
<keyword id="KW-0903">Direct protein sequencing</keyword>
<keyword id="KW-0249">Electron transport</keyword>
<keyword id="KW-0349">Heme</keyword>
<keyword id="KW-0408">Iron</keyword>
<keyword id="KW-0479">Metal-binding</keyword>
<keyword id="KW-0496">Mitochondrion</keyword>
<keyword id="KW-0597">Phosphoprotein</keyword>
<keyword id="KW-0679">Respiratory chain</keyword>
<keyword id="KW-0813">Transport</keyword>
<comment type="function">
    <text>Electron carrier protein. The oxidized form of the cytochrome c heme group can accept an electron from the heme group of the cytochrome c1 subunit of cytochrome reductase. Cytochrome c then transfers this electron to the cytochrome oxidase complex, the final protein carrier in the mitochondrial electron-transport chain.</text>
</comment>
<comment type="function">
    <text evidence="1">Plays a role in apoptosis. Suppression of the anti-apoptotic members or activation of the pro-apoptotic members of the Bcl-2 family leads to altered mitochondrial membrane permeability resulting in release of cytochrome c into the cytosol. Binding of cytochrome c to Apaf-1 triggers the activation of caspase-9, which then accelerates apoptosis by activating other caspases (By similarity).</text>
</comment>
<comment type="subcellular location">
    <subcellularLocation>
        <location>Mitochondrion intermembrane space</location>
    </subcellularLocation>
    <text>Loosely associated with the inner membrane.</text>
</comment>
<comment type="PTM">
    <text>Binds 1 heme c group covalently per subunit.</text>
</comment>
<comment type="PTM">
    <text evidence="1">Phosphorylation at Tyr-49 and Tyr-98 both reduce by half the turnover in the reaction with cytochrome c oxidase, down-regulating mitochondrial respiration.</text>
</comment>
<comment type="similarity">
    <text evidence="6">Belongs to the cytochrome c family.</text>
</comment>
<comment type="online information" name="Protein Spotlight">
    <link uri="https://www.proteinspotlight.org/back_issues/076"/>
    <text>Life shuttle - Issue 76 of November 2006</text>
</comment>
<gene>
    <name type="primary">CYCS</name>
    <name type="synonym">CYC</name>
</gene>
<name>CYC_MACGI</name>
<evidence type="ECO:0000250" key="1"/>
<evidence type="ECO:0000250" key="2">
    <source>
        <dbReference type="UniProtKB" id="P62894"/>
    </source>
</evidence>
<evidence type="ECO:0000250" key="3">
    <source>
        <dbReference type="UniProtKB" id="P62897"/>
    </source>
</evidence>
<evidence type="ECO:0000255" key="4">
    <source>
        <dbReference type="PROSITE-ProRule" id="PRU00433"/>
    </source>
</evidence>
<evidence type="ECO:0000269" key="5">
    <source>
    </source>
</evidence>
<evidence type="ECO:0000305" key="6"/>
<accession>P00014</accession>
<organism>
    <name type="scientific">Macropus giganteus</name>
    <name type="common">Eastern gray kangaroo</name>
    <dbReference type="NCBI Taxonomy" id="9317"/>
    <lineage>
        <taxon>Eukaryota</taxon>
        <taxon>Metazoa</taxon>
        <taxon>Chordata</taxon>
        <taxon>Craniata</taxon>
        <taxon>Vertebrata</taxon>
        <taxon>Euteleostomi</taxon>
        <taxon>Mammalia</taxon>
        <taxon>Metatheria</taxon>
        <taxon>Diprotodontia</taxon>
        <taxon>Macropodidae</taxon>
        <taxon>Macropus</taxon>
    </lineage>
</organism>
<reference key="1">
    <citation type="journal article" date="1966" name="J. Biol. Chem.">
        <title>Primary structure of the cytochrome c from the great grey kangaroo, Macropus canguru.</title>
        <authorList>
            <person name="Nolan C."/>
            <person name="Margoliash E."/>
        </authorList>
    </citation>
    <scope>PROTEIN SEQUENCE OF 2-105</scope>
    <scope>ACETYLATION AT GLY-2</scope>
</reference>
<protein>
    <recommendedName>
        <fullName>Cytochrome c</fullName>
    </recommendedName>
</protein>